<comment type="function">
    <text evidence="1 2">Transfers an acetyl group from acetyl-CoA to L-homoserine, forming acetyl-L-homoserine.</text>
</comment>
<comment type="catalytic activity">
    <reaction evidence="1 2">
        <text>L-homoserine + acetyl-CoA = O-acetyl-L-homoserine + CoA</text>
        <dbReference type="Rhea" id="RHEA:13701"/>
        <dbReference type="ChEBI" id="CHEBI:57287"/>
        <dbReference type="ChEBI" id="CHEBI:57288"/>
        <dbReference type="ChEBI" id="CHEBI:57476"/>
        <dbReference type="ChEBI" id="CHEBI:57716"/>
        <dbReference type="EC" id="2.3.1.31"/>
    </reaction>
</comment>
<comment type="pathway">
    <text evidence="1">Amino-acid biosynthesis; L-methionine biosynthesis via de novo pathway; O-acetyl-L-homoserine from L-homoserine: step 1/1.</text>
</comment>
<comment type="subcellular location">
    <subcellularLocation>
        <location evidence="1">Cytoplasm</location>
    </subcellularLocation>
</comment>
<comment type="similarity">
    <text evidence="1">Belongs to the MetA family.</text>
</comment>
<name>METAA_RUEPO</name>
<dbReference type="EC" id="2.3.1.31" evidence="1 2"/>
<dbReference type="EMBL" id="CP000031">
    <property type="protein sequence ID" value="AAV95011.1"/>
    <property type="molecule type" value="Genomic_DNA"/>
</dbReference>
<dbReference type="RefSeq" id="WP_011047465.1">
    <property type="nucleotide sequence ID" value="NC_003911.12"/>
</dbReference>
<dbReference type="SMR" id="Q5LSN6"/>
<dbReference type="STRING" id="246200.SPO1729"/>
<dbReference type="PaxDb" id="246200-SPO1729"/>
<dbReference type="KEGG" id="sil:SPO1729"/>
<dbReference type="eggNOG" id="COG1897">
    <property type="taxonomic scope" value="Bacteria"/>
</dbReference>
<dbReference type="HOGENOM" id="CLU_057851_0_1_5"/>
<dbReference type="OrthoDB" id="9772423at2"/>
<dbReference type="UniPathway" id="UPA00051">
    <property type="reaction ID" value="UER00074"/>
</dbReference>
<dbReference type="Proteomes" id="UP000001023">
    <property type="component" value="Chromosome"/>
</dbReference>
<dbReference type="GO" id="GO:0005737">
    <property type="term" value="C:cytoplasm"/>
    <property type="evidence" value="ECO:0007669"/>
    <property type="project" value="UniProtKB-SubCell"/>
</dbReference>
<dbReference type="GO" id="GO:0004414">
    <property type="term" value="F:homoserine O-acetyltransferase activity"/>
    <property type="evidence" value="ECO:0007669"/>
    <property type="project" value="UniProtKB-EC"/>
</dbReference>
<dbReference type="GO" id="GO:0008899">
    <property type="term" value="F:homoserine O-succinyltransferase activity"/>
    <property type="evidence" value="ECO:0007669"/>
    <property type="project" value="UniProtKB-UniRule"/>
</dbReference>
<dbReference type="GO" id="GO:0019281">
    <property type="term" value="P:L-methionine biosynthetic process from homoserine via O-succinyl-L-homoserine and cystathionine"/>
    <property type="evidence" value="ECO:0007669"/>
    <property type="project" value="InterPro"/>
</dbReference>
<dbReference type="CDD" id="cd03131">
    <property type="entry name" value="GATase1_HTS"/>
    <property type="match status" value="1"/>
</dbReference>
<dbReference type="Gene3D" id="3.40.50.880">
    <property type="match status" value="1"/>
</dbReference>
<dbReference type="HAMAP" id="MF_00295">
    <property type="entry name" value="MetA_acyltransf"/>
    <property type="match status" value="1"/>
</dbReference>
<dbReference type="InterPro" id="IPR029062">
    <property type="entry name" value="Class_I_gatase-like"/>
</dbReference>
<dbReference type="InterPro" id="IPR005697">
    <property type="entry name" value="HST_MetA"/>
</dbReference>
<dbReference type="InterPro" id="IPR033752">
    <property type="entry name" value="MetA_family"/>
</dbReference>
<dbReference type="NCBIfam" id="TIGR01001">
    <property type="entry name" value="metA"/>
    <property type="match status" value="1"/>
</dbReference>
<dbReference type="PANTHER" id="PTHR20919">
    <property type="entry name" value="HOMOSERINE O-SUCCINYLTRANSFERASE"/>
    <property type="match status" value="1"/>
</dbReference>
<dbReference type="PANTHER" id="PTHR20919:SF0">
    <property type="entry name" value="HOMOSERINE O-SUCCINYLTRANSFERASE"/>
    <property type="match status" value="1"/>
</dbReference>
<dbReference type="Pfam" id="PF04204">
    <property type="entry name" value="HTS"/>
    <property type="match status" value="1"/>
</dbReference>
<dbReference type="PIRSF" id="PIRSF000450">
    <property type="entry name" value="H_ser_succinyltr"/>
    <property type="match status" value="1"/>
</dbReference>
<dbReference type="SUPFAM" id="SSF52317">
    <property type="entry name" value="Class I glutamine amidotransferase-like"/>
    <property type="match status" value="1"/>
</dbReference>
<reference key="1">
    <citation type="journal article" date="2004" name="Nature">
        <title>Genome sequence of Silicibacter pomeroyi reveals adaptations to the marine environment.</title>
        <authorList>
            <person name="Moran M.A."/>
            <person name="Buchan A."/>
            <person name="Gonzalez J.M."/>
            <person name="Heidelberg J.F."/>
            <person name="Whitman W.B."/>
            <person name="Kiene R.P."/>
            <person name="Henriksen J.R."/>
            <person name="King G.M."/>
            <person name="Belas R."/>
            <person name="Fuqua C."/>
            <person name="Brinkac L.M."/>
            <person name="Lewis M."/>
            <person name="Johri S."/>
            <person name="Weaver B."/>
            <person name="Pai G."/>
            <person name="Eisen J.A."/>
            <person name="Rahe E."/>
            <person name="Sheldon W.M."/>
            <person name="Ye W."/>
            <person name="Miller T.R."/>
            <person name="Carlton J."/>
            <person name="Rasko D.A."/>
            <person name="Paulsen I.T."/>
            <person name="Ren Q."/>
            <person name="Daugherty S.C."/>
            <person name="DeBoy R.T."/>
            <person name="Dodson R.J."/>
            <person name="Durkin A.S."/>
            <person name="Madupu R."/>
            <person name="Nelson W.C."/>
            <person name="Sullivan S.A."/>
            <person name="Rosovitz M.J."/>
            <person name="Haft D.H."/>
            <person name="Selengut J."/>
            <person name="Ward N."/>
        </authorList>
    </citation>
    <scope>NUCLEOTIDE SEQUENCE [LARGE SCALE GENOMIC DNA]</scope>
    <source>
        <strain>ATCC 700808 / DSM 15171 / DSS-3</strain>
    </source>
</reference>
<reference key="2">
    <citation type="journal article" date="2014" name="Stand. Genomic Sci.">
        <title>An updated genome annotation for the model marine bacterium Ruegeria pomeroyi DSS-3.</title>
        <authorList>
            <person name="Rivers A.R."/>
            <person name="Smith C.B."/>
            <person name="Moran M.A."/>
        </authorList>
    </citation>
    <scope>GENOME REANNOTATION</scope>
    <source>
        <strain>ATCC 700808 / DSM 15171 / DSS-3</strain>
    </source>
</reference>
<reference key="3">
    <citation type="journal article" date="2017" name="Nat. Chem. Biol.">
        <title>Parallel evolution of non-homologous isofunctional enzymes in methionine biosynthesis.</title>
        <authorList>
            <person name="Bastard K."/>
            <person name="Perret A."/>
            <person name="Mariage A."/>
            <person name="Bessonnet T."/>
            <person name="Pinet-Turpault A."/>
            <person name="Petit J.L."/>
            <person name="Darii E."/>
            <person name="Bazire P."/>
            <person name="Vergne-Vaxelaire C."/>
            <person name="Brewee C."/>
            <person name="Debard A."/>
            <person name="Pellouin V."/>
            <person name="Besnard-Gonnet M."/>
            <person name="Artiguenave F."/>
            <person name="Medigue C."/>
            <person name="Vallenet D."/>
            <person name="Danchin A."/>
            <person name="Zaparucha A."/>
            <person name="Weissenbach J."/>
            <person name="Salanoubat M."/>
            <person name="de Berardinis V."/>
        </authorList>
    </citation>
    <scope>FUNCTION</scope>
    <scope>CATALYTIC ACTIVITY</scope>
</reference>
<keyword id="KW-0012">Acyltransferase</keyword>
<keyword id="KW-0028">Amino-acid biosynthesis</keyword>
<keyword id="KW-0963">Cytoplasm</keyword>
<keyword id="KW-0486">Methionine biosynthesis</keyword>
<keyword id="KW-1185">Reference proteome</keyword>
<keyword id="KW-0808">Transferase</keyword>
<proteinExistence type="evidence at protein level"/>
<feature type="chain" id="PRO_1000021847" description="Homoserine O-acetyltransferase">
    <location>
        <begin position="1"/>
        <end position="312"/>
    </location>
</feature>
<feature type="active site" description="Acyl-thioester intermediate" evidence="1">
    <location>
        <position position="142"/>
    </location>
</feature>
<feature type="active site" description="Proton acceptor" evidence="1">
    <location>
        <position position="235"/>
    </location>
</feature>
<feature type="active site" evidence="1">
    <location>
        <position position="237"/>
    </location>
</feature>
<feature type="binding site" evidence="1">
    <location>
        <position position="163"/>
    </location>
    <ligand>
        <name>substrate</name>
    </ligand>
</feature>
<feature type="binding site" evidence="1">
    <location>
        <position position="192"/>
    </location>
    <ligand>
        <name>substrate</name>
    </ligand>
</feature>
<feature type="binding site" evidence="1">
    <location>
        <position position="249"/>
    </location>
    <ligand>
        <name>substrate</name>
    </ligand>
</feature>
<feature type="site" description="Important for acyl-CoA specificity" evidence="1">
    <location>
        <position position="111"/>
    </location>
</feature>
<feature type="site" description="Important for substrate specificity" evidence="1">
    <location>
        <position position="192"/>
    </location>
</feature>
<protein>
    <recommendedName>
        <fullName evidence="1">Homoserine O-acetyltransferase</fullName>
        <shortName evidence="1 3">HAT</shortName>
        <ecNumber evidence="1 2">2.3.1.31</ecNumber>
    </recommendedName>
    <alternativeName>
        <fullName evidence="1">Homoserine transacetylase</fullName>
        <shortName evidence="1">HTA</shortName>
    </alternativeName>
</protein>
<sequence length="312" mass="35866">MPIKIPAHLPAYDILTREGVMVMSEDQAARQDIRPLRIGLLNLMPKKIQTETQFARLIGATPLQIELSLIRMTEHQTKTTASEHMEEFYRPFQEVRDEKFDGLIITGAPIEHLEFSDVTYWDELGEVFAWTQSNVHSTFGVCWGGMAMINHFHGIRKHMLDHKAFGCFRHRNLDPASPYLRGFSDDFVIPVSRWTEVKQAEVDAVPELVTLLGSDEVGPCLISDPGHRALYIFNHFEYDSDTLKQEYDRDVEGGTAINVPINYYPDDDPSRKPLNRWRSHAHLLYGNWISEIYETTPYDMARIGLESTDLRG</sequence>
<gene>
    <name evidence="1 3" type="primary">metAA</name>
    <name type="ordered locus">SPO1729</name>
</gene>
<evidence type="ECO:0000255" key="1">
    <source>
        <dbReference type="HAMAP-Rule" id="MF_00295"/>
    </source>
</evidence>
<evidence type="ECO:0000269" key="2">
    <source>
    </source>
</evidence>
<evidence type="ECO:0000303" key="3">
    <source>
    </source>
</evidence>
<accession>Q5LSN6</accession>
<organism>
    <name type="scientific">Ruegeria pomeroyi (strain ATCC 700808 / DSM 15171 / DSS-3)</name>
    <name type="common">Silicibacter pomeroyi</name>
    <dbReference type="NCBI Taxonomy" id="246200"/>
    <lineage>
        <taxon>Bacteria</taxon>
        <taxon>Pseudomonadati</taxon>
        <taxon>Pseudomonadota</taxon>
        <taxon>Alphaproteobacteria</taxon>
        <taxon>Rhodobacterales</taxon>
        <taxon>Roseobacteraceae</taxon>
        <taxon>Ruegeria</taxon>
    </lineage>
</organism>